<sequence>MEHQELNELVKVRLEKLSELRKMGIEPYGGKFERTHTAKEILDNFEQLVDKTVKIAGRIMAKRGHGKASFAHIQDMSGKIQIYARQNELGIDAYKLFEKLDIGDIIGVTGHVFKTQKGEITVWLSSFEILAKSLRPLPEKWHGLTDVELRYRQRYVDLIVNPEVRETFILRSRIVKTIREFLDQKGFLEVETPMMHPIAGGAAARPFITHHNALDMKLYLRIAPELYLKRLLVGGFEKVYEINRNFRNEGISTKHNPEFTMLELYQAYADYHDMMDITEELITHVAEKVLGTLEITYQGTPINLHRPWKRIPMLKAIEEATGVDFAGVKDPVQAYAKAKELGVPVEEGMGWGEIITAVFEEKVEPTLINPTFVIDYPVEVSPLAKRQKENPDLTYRFELFIYGREMANAFSELNDPIDQKERFLKQLEARAKGNEEAHMMDEDYITALEYGMPPAGGLGIGIDRLVMLLTDQASIRDVILFPLMRPRD</sequence>
<organism>
    <name type="scientific">Carboxydothermus hydrogenoformans (strain ATCC BAA-161 / DSM 6008 / Z-2901)</name>
    <dbReference type="NCBI Taxonomy" id="246194"/>
    <lineage>
        <taxon>Bacteria</taxon>
        <taxon>Bacillati</taxon>
        <taxon>Bacillota</taxon>
        <taxon>Clostridia</taxon>
        <taxon>Thermoanaerobacterales</taxon>
        <taxon>Thermoanaerobacteraceae</taxon>
        <taxon>Carboxydothermus</taxon>
    </lineage>
</organism>
<protein>
    <recommendedName>
        <fullName evidence="1">Lysine--tRNA ligase</fullName>
        <ecNumber evidence="1">6.1.1.6</ecNumber>
    </recommendedName>
    <alternativeName>
        <fullName evidence="1">Lysyl-tRNA synthetase</fullName>
        <shortName evidence="1">LysRS</shortName>
    </alternativeName>
</protein>
<name>SYK_CARHZ</name>
<proteinExistence type="inferred from homology"/>
<evidence type="ECO:0000255" key="1">
    <source>
        <dbReference type="HAMAP-Rule" id="MF_00252"/>
    </source>
</evidence>
<comment type="catalytic activity">
    <reaction evidence="1">
        <text>tRNA(Lys) + L-lysine + ATP = L-lysyl-tRNA(Lys) + AMP + diphosphate</text>
        <dbReference type="Rhea" id="RHEA:20792"/>
        <dbReference type="Rhea" id="RHEA-COMP:9696"/>
        <dbReference type="Rhea" id="RHEA-COMP:9697"/>
        <dbReference type="ChEBI" id="CHEBI:30616"/>
        <dbReference type="ChEBI" id="CHEBI:32551"/>
        <dbReference type="ChEBI" id="CHEBI:33019"/>
        <dbReference type="ChEBI" id="CHEBI:78442"/>
        <dbReference type="ChEBI" id="CHEBI:78529"/>
        <dbReference type="ChEBI" id="CHEBI:456215"/>
        <dbReference type="EC" id="6.1.1.6"/>
    </reaction>
</comment>
<comment type="cofactor">
    <cofactor evidence="1">
        <name>Mg(2+)</name>
        <dbReference type="ChEBI" id="CHEBI:18420"/>
    </cofactor>
    <text evidence="1">Binds 3 Mg(2+) ions per subunit.</text>
</comment>
<comment type="subunit">
    <text evidence="1">Homodimer.</text>
</comment>
<comment type="subcellular location">
    <subcellularLocation>
        <location evidence="1">Cytoplasm</location>
    </subcellularLocation>
</comment>
<comment type="similarity">
    <text evidence="1">Belongs to the class-II aminoacyl-tRNA synthetase family.</text>
</comment>
<gene>
    <name evidence="1" type="primary">lysS</name>
    <name type="ordered locus">CHY_2365</name>
</gene>
<accession>Q3A9M2</accession>
<reference key="1">
    <citation type="journal article" date="2005" name="PLoS Genet.">
        <title>Life in hot carbon monoxide: the complete genome sequence of Carboxydothermus hydrogenoformans Z-2901.</title>
        <authorList>
            <person name="Wu M."/>
            <person name="Ren Q."/>
            <person name="Durkin A.S."/>
            <person name="Daugherty S.C."/>
            <person name="Brinkac L.M."/>
            <person name="Dodson R.J."/>
            <person name="Madupu R."/>
            <person name="Sullivan S.A."/>
            <person name="Kolonay J.F."/>
            <person name="Nelson W.C."/>
            <person name="Tallon L.J."/>
            <person name="Jones K.M."/>
            <person name="Ulrich L.E."/>
            <person name="Gonzalez J.M."/>
            <person name="Zhulin I.B."/>
            <person name="Robb F.T."/>
            <person name="Eisen J.A."/>
        </authorList>
    </citation>
    <scope>NUCLEOTIDE SEQUENCE [LARGE SCALE GENOMIC DNA]</scope>
    <source>
        <strain>ATCC BAA-161 / DSM 6008 / Z-2901</strain>
    </source>
</reference>
<keyword id="KW-0030">Aminoacyl-tRNA synthetase</keyword>
<keyword id="KW-0067">ATP-binding</keyword>
<keyword id="KW-0963">Cytoplasm</keyword>
<keyword id="KW-0436">Ligase</keyword>
<keyword id="KW-0460">Magnesium</keyword>
<keyword id="KW-0479">Metal-binding</keyword>
<keyword id="KW-0547">Nucleotide-binding</keyword>
<keyword id="KW-0648">Protein biosynthesis</keyword>
<keyword id="KW-1185">Reference proteome</keyword>
<dbReference type="EC" id="6.1.1.6" evidence="1"/>
<dbReference type="EMBL" id="CP000141">
    <property type="protein sequence ID" value="ABB15585.1"/>
    <property type="molecule type" value="Genomic_DNA"/>
</dbReference>
<dbReference type="RefSeq" id="WP_011345235.1">
    <property type="nucleotide sequence ID" value="NC_007503.1"/>
</dbReference>
<dbReference type="SMR" id="Q3A9M2"/>
<dbReference type="FunCoup" id="Q3A9M2">
    <property type="interactions" value="488"/>
</dbReference>
<dbReference type="STRING" id="246194.CHY_2365"/>
<dbReference type="KEGG" id="chy:CHY_2365"/>
<dbReference type="eggNOG" id="COG1190">
    <property type="taxonomic scope" value="Bacteria"/>
</dbReference>
<dbReference type="HOGENOM" id="CLU_008255_6_0_9"/>
<dbReference type="InParanoid" id="Q3A9M2"/>
<dbReference type="OrthoDB" id="9802326at2"/>
<dbReference type="Proteomes" id="UP000002706">
    <property type="component" value="Chromosome"/>
</dbReference>
<dbReference type="GO" id="GO:0005829">
    <property type="term" value="C:cytosol"/>
    <property type="evidence" value="ECO:0007669"/>
    <property type="project" value="TreeGrafter"/>
</dbReference>
<dbReference type="GO" id="GO:0005524">
    <property type="term" value="F:ATP binding"/>
    <property type="evidence" value="ECO:0007669"/>
    <property type="project" value="UniProtKB-UniRule"/>
</dbReference>
<dbReference type="GO" id="GO:0140096">
    <property type="term" value="F:catalytic activity, acting on a protein"/>
    <property type="evidence" value="ECO:0007669"/>
    <property type="project" value="UniProtKB-ARBA"/>
</dbReference>
<dbReference type="GO" id="GO:0004824">
    <property type="term" value="F:lysine-tRNA ligase activity"/>
    <property type="evidence" value="ECO:0007669"/>
    <property type="project" value="UniProtKB-UniRule"/>
</dbReference>
<dbReference type="GO" id="GO:0000287">
    <property type="term" value="F:magnesium ion binding"/>
    <property type="evidence" value="ECO:0007669"/>
    <property type="project" value="UniProtKB-UniRule"/>
</dbReference>
<dbReference type="GO" id="GO:0016740">
    <property type="term" value="F:transferase activity"/>
    <property type="evidence" value="ECO:0007669"/>
    <property type="project" value="UniProtKB-ARBA"/>
</dbReference>
<dbReference type="GO" id="GO:0000049">
    <property type="term" value="F:tRNA binding"/>
    <property type="evidence" value="ECO:0007669"/>
    <property type="project" value="TreeGrafter"/>
</dbReference>
<dbReference type="GO" id="GO:0006430">
    <property type="term" value="P:lysyl-tRNA aminoacylation"/>
    <property type="evidence" value="ECO:0007669"/>
    <property type="project" value="UniProtKB-UniRule"/>
</dbReference>
<dbReference type="CDD" id="cd00775">
    <property type="entry name" value="LysRS_core"/>
    <property type="match status" value="1"/>
</dbReference>
<dbReference type="CDD" id="cd04322">
    <property type="entry name" value="LysRS_N"/>
    <property type="match status" value="1"/>
</dbReference>
<dbReference type="FunFam" id="2.40.50.140:FF:000024">
    <property type="entry name" value="Lysine--tRNA ligase"/>
    <property type="match status" value="1"/>
</dbReference>
<dbReference type="FunFam" id="3.30.930.10:FF:000001">
    <property type="entry name" value="Lysine--tRNA ligase"/>
    <property type="match status" value="1"/>
</dbReference>
<dbReference type="Gene3D" id="3.30.930.10">
    <property type="entry name" value="Bira Bifunctional Protein, Domain 2"/>
    <property type="match status" value="1"/>
</dbReference>
<dbReference type="Gene3D" id="2.40.50.140">
    <property type="entry name" value="Nucleic acid-binding proteins"/>
    <property type="match status" value="1"/>
</dbReference>
<dbReference type="HAMAP" id="MF_00252">
    <property type="entry name" value="Lys_tRNA_synth_class2"/>
    <property type="match status" value="1"/>
</dbReference>
<dbReference type="InterPro" id="IPR004364">
    <property type="entry name" value="Aa-tRNA-synt_II"/>
</dbReference>
<dbReference type="InterPro" id="IPR006195">
    <property type="entry name" value="aa-tRNA-synth_II"/>
</dbReference>
<dbReference type="InterPro" id="IPR045864">
    <property type="entry name" value="aa-tRNA-synth_II/BPL/LPL"/>
</dbReference>
<dbReference type="InterPro" id="IPR002313">
    <property type="entry name" value="Lys-tRNA-ligase_II"/>
</dbReference>
<dbReference type="InterPro" id="IPR034762">
    <property type="entry name" value="Lys-tRNA-ligase_II_bac/euk"/>
</dbReference>
<dbReference type="InterPro" id="IPR044136">
    <property type="entry name" value="Lys-tRNA-ligase_II_N"/>
</dbReference>
<dbReference type="InterPro" id="IPR018149">
    <property type="entry name" value="Lys-tRNA-synth_II_C"/>
</dbReference>
<dbReference type="InterPro" id="IPR012340">
    <property type="entry name" value="NA-bd_OB-fold"/>
</dbReference>
<dbReference type="InterPro" id="IPR004365">
    <property type="entry name" value="NA-bd_OB_tRNA"/>
</dbReference>
<dbReference type="NCBIfam" id="TIGR00499">
    <property type="entry name" value="lysS_bact"/>
    <property type="match status" value="1"/>
</dbReference>
<dbReference type="NCBIfam" id="NF001756">
    <property type="entry name" value="PRK00484.1"/>
    <property type="match status" value="1"/>
</dbReference>
<dbReference type="PANTHER" id="PTHR42918:SF15">
    <property type="entry name" value="LYSINE--TRNA LIGASE, CHLOROPLASTIC_MITOCHONDRIAL"/>
    <property type="match status" value="1"/>
</dbReference>
<dbReference type="PANTHER" id="PTHR42918">
    <property type="entry name" value="LYSYL-TRNA SYNTHETASE"/>
    <property type="match status" value="1"/>
</dbReference>
<dbReference type="Pfam" id="PF00152">
    <property type="entry name" value="tRNA-synt_2"/>
    <property type="match status" value="1"/>
</dbReference>
<dbReference type="Pfam" id="PF01336">
    <property type="entry name" value="tRNA_anti-codon"/>
    <property type="match status" value="1"/>
</dbReference>
<dbReference type="PIRSF" id="PIRSF039101">
    <property type="entry name" value="LysRS2"/>
    <property type="match status" value="1"/>
</dbReference>
<dbReference type="PRINTS" id="PR00982">
    <property type="entry name" value="TRNASYNTHLYS"/>
</dbReference>
<dbReference type="SUPFAM" id="SSF55681">
    <property type="entry name" value="Class II aaRS and biotin synthetases"/>
    <property type="match status" value="1"/>
</dbReference>
<dbReference type="SUPFAM" id="SSF50249">
    <property type="entry name" value="Nucleic acid-binding proteins"/>
    <property type="match status" value="1"/>
</dbReference>
<dbReference type="PROSITE" id="PS50862">
    <property type="entry name" value="AA_TRNA_LIGASE_II"/>
    <property type="match status" value="1"/>
</dbReference>
<feature type="chain" id="PRO_1000012865" description="Lysine--tRNA ligase">
    <location>
        <begin position="1"/>
        <end position="488"/>
    </location>
</feature>
<feature type="binding site" evidence="1">
    <location>
        <position position="398"/>
    </location>
    <ligand>
        <name>Mg(2+)</name>
        <dbReference type="ChEBI" id="CHEBI:18420"/>
        <label>1</label>
    </ligand>
</feature>
<feature type="binding site" evidence="1">
    <location>
        <position position="405"/>
    </location>
    <ligand>
        <name>Mg(2+)</name>
        <dbReference type="ChEBI" id="CHEBI:18420"/>
        <label>1</label>
    </ligand>
</feature>
<feature type="binding site" evidence="1">
    <location>
        <position position="405"/>
    </location>
    <ligand>
        <name>Mg(2+)</name>
        <dbReference type="ChEBI" id="CHEBI:18420"/>
        <label>2</label>
    </ligand>
</feature>